<organism>
    <name type="scientific">Fowlpox virus (strain NVSL)</name>
    <name type="common">FPV</name>
    <dbReference type="NCBI Taxonomy" id="928301"/>
    <lineage>
        <taxon>Viruses</taxon>
        <taxon>Varidnaviria</taxon>
        <taxon>Bamfordvirae</taxon>
        <taxon>Nucleocytoviricota</taxon>
        <taxon>Pokkesviricetes</taxon>
        <taxon>Chitovirales</taxon>
        <taxon>Poxviridae</taxon>
        <taxon>Chordopoxvirinae</taxon>
        <taxon>Avipoxvirus</taxon>
        <taxon>Fowlpox virus</taxon>
    </lineage>
</organism>
<keyword id="KW-1015">Disulfide bond</keyword>
<keyword id="KW-1168">Fusion of virus membrane with host membrane</keyword>
<keyword id="KW-0426">Late protein</keyword>
<keyword id="KW-0446">Lipid-binding</keyword>
<keyword id="KW-0449">Lipoprotein</keyword>
<keyword id="KW-0472">Membrane</keyword>
<keyword id="KW-0519">Myristate</keyword>
<keyword id="KW-1185">Reference proteome</keyword>
<keyword id="KW-0735">Signal-anchor</keyword>
<keyword id="KW-0812">Transmembrane</keyword>
<keyword id="KW-1133">Transmembrane helix</keyword>
<keyword id="KW-0261">Viral envelope protein</keyword>
<keyword id="KW-1162">Viral penetration into host cytoplasm</keyword>
<keyword id="KW-0946">Virion</keyword>
<keyword id="KW-1160">Virus entry into host cell</keyword>
<protein>
    <recommendedName>
        <fullName>Virion membrane protein A16 homolog</fullName>
    </recommendedName>
</protein>
<gene>
    <name type="ordered locus">FPV181</name>
</gene>
<accession>Q9J552</accession>
<comment type="function">
    <text evidence="1">Envelope protein part of the entry-fusion complex responsible for the virus membrane fusion with host cell membrane during virus entry. Also plays a role in cell-cell fusion (syncytium formation) (By similarity).</text>
</comment>
<comment type="subunit">
    <text evidence="1">Part of a stable entry-fusion complex (EFC) which is at least composed of proteins A16, A21, A28, G3, G9, H2, J5, and L5. Formation of the viral membrane is necessary for the assembly of the complex. Interacts with G9 (By similarity).</text>
</comment>
<comment type="subcellular location">
    <subcellularLocation>
        <location evidence="3">Virion membrane</location>
        <topology evidence="3">Single-pass type II membrane protein</topology>
    </subcellularLocation>
    <text evidence="1">Component of the mature virion (MV) membrane. The mature virion is located in the cytoplasm of infected cells and is probably released by cell lysis.</text>
</comment>
<comment type="induction">
    <text>Expressed in the late phase of the viral replicative cycle.</text>
</comment>
<comment type="PTM">
    <text evidence="1">Most cysteines are linked by disulfide bonds. They are created by the viral disulfide bond formation pathway, a poxvirus-specific redox pathway that operates on the cytoplasmic side of the MV membranes (By similarity).</text>
</comment>
<comment type="similarity">
    <text evidence="3">Belongs to the poxviridae A16/G9/J5 family.</text>
</comment>
<organismHost>
    <name type="scientific">Vertebrata</name>
    <dbReference type="NCBI Taxonomy" id="7742"/>
</organismHost>
<reference key="1">
    <citation type="journal article" date="2000" name="J. Virol.">
        <title>The genome of fowlpox virus.</title>
        <authorList>
            <person name="Afonso C.L."/>
            <person name="Tulman E.R."/>
            <person name="Lu Z."/>
            <person name="Zsak L."/>
            <person name="Kutish G.F."/>
            <person name="Rock D.L."/>
        </authorList>
    </citation>
    <scope>NUCLEOTIDE SEQUENCE [LARGE SCALE GENOMIC DNA]</scope>
</reference>
<feature type="initiator methionine" description="Removed; by host" evidence="1">
    <location>
        <position position="1"/>
    </location>
</feature>
<feature type="chain" id="PRO_0000099256" description="Virion membrane protein A16 homolog">
    <location>
        <begin position="2"/>
        <end position="369"/>
    </location>
</feature>
<feature type="topological domain" description="Virion surface" evidence="2">
    <location>
        <begin position="2"/>
        <end position="330"/>
    </location>
</feature>
<feature type="transmembrane region" description="Helical" evidence="2">
    <location>
        <begin position="331"/>
        <end position="351"/>
    </location>
</feature>
<feature type="topological domain" description="Intravirion" evidence="2">
    <location>
        <begin position="352"/>
        <end position="369"/>
    </location>
</feature>
<feature type="lipid moiety-binding region" description="N-myristoyl glycine; by host" evidence="1">
    <location>
        <position position="2"/>
    </location>
</feature>
<name>A16_FOWPN</name>
<dbReference type="EMBL" id="AF198100">
    <property type="protein sequence ID" value="AAF44525.1"/>
    <property type="molecule type" value="Genomic_DNA"/>
</dbReference>
<dbReference type="RefSeq" id="NP_039144.1">
    <property type="nucleotide sequence ID" value="NC_002188.1"/>
</dbReference>
<dbReference type="SMR" id="Q9J552"/>
<dbReference type="GeneID" id="1486753"/>
<dbReference type="KEGG" id="vg:1486753"/>
<dbReference type="Proteomes" id="UP000008597">
    <property type="component" value="Segment"/>
</dbReference>
<dbReference type="GO" id="GO:0016020">
    <property type="term" value="C:membrane"/>
    <property type="evidence" value="ECO:0007669"/>
    <property type="project" value="UniProtKB-KW"/>
</dbReference>
<dbReference type="GO" id="GO:0019031">
    <property type="term" value="C:viral envelope"/>
    <property type="evidence" value="ECO:0007669"/>
    <property type="project" value="UniProtKB-KW"/>
</dbReference>
<dbReference type="GO" id="GO:0055036">
    <property type="term" value="C:virion membrane"/>
    <property type="evidence" value="ECO:0007669"/>
    <property type="project" value="UniProtKB-SubCell"/>
</dbReference>
<dbReference type="GO" id="GO:0008289">
    <property type="term" value="F:lipid binding"/>
    <property type="evidence" value="ECO:0007669"/>
    <property type="project" value="UniProtKB-KW"/>
</dbReference>
<dbReference type="GO" id="GO:0039663">
    <property type="term" value="P:membrane fusion involved in viral entry into host cell"/>
    <property type="evidence" value="ECO:0007669"/>
    <property type="project" value="UniProtKB-KW"/>
</dbReference>
<dbReference type="GO" id="GO:0046718">
    <property type="term" value="P:symbiont entry into host cell"/>
    <property type="evidence" value="ECO:0007669"/>
    <property type="project" value="UniProtKB-KW"/>
</dbReference>
<dbReference type="InterPro" id="IPR004251">
    <property type="entry name" value="Pox_virus_G9/A16"/>
</dbReference>
<dbReference type="Pfam" id="PF03003">
    <property type="entry name" value="Pox_G9-A16"/>
    <property type="match status" value="1"/>
</dbReference>
<sequence length="369" mass="42082">MGQHVSNITVIATPQAPETKYLRVEYTGGYDDEYIRFFEAENIHSGDIGSEISPPFCLTRDTTVKQCASFLSPEAKKKFVIVPGEPCKSLSFRPGSILDLQKIPYGTESYVLDGTRCRFINIDYLYTDPDIKRCCNKESDKDCPEIFSNNYETDHCDTIMSSICLQTPGSLPCREWLEKKREVAFDTYMKVCSDHLDANYCSDFVDYTRPDNFGYSDAAILSYCSKHRNNPNCWCVTTPKNDKLFSLELALGPKVCWLHECTDKSKDRKYLLFDQDVQRTNCKYIGCNINVDTLRLRNSVAELIAKCGGSIAEDTVLGDDSYNKEAKLPSFFSIIPVCIVLLCLFVLFYFLRIYDAKVINSNTINVYRK</sequence>
<evidence type="ECO:0000250" key="1"/>
<evidence type="ECO:0000255" key="2"/>
<evidence type="ECO:0000305" key="3"/>
<proteinExistence type="evidence at transcript level"/>